<keyword id="KW-0002">3D-structure</keyword>
<keyword id="KW-1035">Host cytoplasm</keyword>
<keyword id="KW-1048">Host nucleus</keyword>
<keyword id="KW-0945">Host-virus interaction</keyword>
<keyword id="KW-1224">Inhibition of host IKBKE by virus</keyword>
<keyword id="KW-1090">Inhibition of host innate immune response by virus</keyword>
<keyword id="KW-1100">Inhibition of host NF-kappa-B by virus</keyword>
<keyword id="KW-1113">Inhibition of host RLR pathway by virus</keyword>
<keyword id="KW-1185">Reference proteome</keyword>
<keyword id="KW-0899">Viral immunoevasion</keyword>
<name>ORF4B_MERS1</name>
<organismHost>
    <name type="scientific">Camelus dromedarius</name>
    <name type="common">Dromedary</name>
    <name type="synonym">Arabian camel</name>
    <dbReference type="NCBI Taxonomy" id="9838"/>
</organismHost>
<organismHost>
    <name type="scientific">Homo sapiens</name>
    <name type="common">Human</name>
    <dbReference type="NCBI Taxonomy" id="9606"/>
</organismHost>
<accession>K9N643</accession>
<proteinExistence type="evidence at protein level"/>
<dbReference type="EMBL" id="KC164505">
    <property type="protein sequence ID" value="AFY13310.1"/>
    <property type="molecule type" value="Genomic_RNA"/>
</dbReference>
<dbReference type="RefSeq" id="YP_007188582.1">
    <property type="nucleotide sequence ID" value="NC_038294.1"/>
</dbReference>
<dbReference type="PDB" id="7RFX">
    <property type="method" value="X-ray"/>
    <property type="resolution" value="2.10 A"/>
    <property type="chains" value="B=19-39"/>
</dbReference>
<dbReference type="PDB" id="7RFY">
    <property type="method" value="X-ray"/>
    <property type="resolution" value="2.50 A"/>
    <property type="chains" value="B=19-39"/>
</dbReference>
<dbReference type="PDB" id="7RFZ">
    <property type="method" value="X-ray"/>
    <property type="resolution" value="1.95 A"/>
    <property type="chains" value="B=19-39"/>
</dbReference>
<dbReference type="PDB" id="7RG0">
    <property type="method" value="X-ray"/>
    <property type="resolution" value="2.00 A"/>
    <property type="chains" value="B=19-39"/>
</dbReference>
<dbReference type="PDB" id="7RG1">
    <property type="method" value="X-ray"/>
    <property type="resolution" value="1.85 A"/>
    <property type="chains" value="B=19-39"/>
</dbReference>
<dbReference type="PDB" id="7RG2">
    <property type="method" value="X-ray"/>
    <property type="resolution" value="2.00 A"/>
    <property type="chains" value="B=19-39"/>
</dbReference>
<dbReference type="PDB" id="7RG3">
    <property type="method" value="X-ray"/>
    <property type="resolution" value="2.00 A"/>
    <property type="chains" value="B/C=19-39"/>
</dbReference>
<dbReference type="PDBsum" id="7RFX"/>
<dbReference type="PDBsum" id="7RFY"/>
<dbReference type="PDBsum" id="7RFZ"/>
<dbReference type="PDBsum" id="7RG0"/>
<dbReference type="PDBsum" id="7RG1"/>
<dbReference type="PDBsum" id="7RG2"/>
<dbReference type="PDBsum" id="7RG3"/>
<dbReference type="SMR" id="K9N643"/>
<dbReference type="BioGRID" id="4383883">
    <property type="interactions" value="26"/>
</dbReference>
<dbReference type="IntAct" id="K9N643">
    <property type="interactions" value="12"/>
</dbReference>
<dbReference type="GeneID" id="37616435"/>
<dbReference type="SIGNOR" id="K9N643"/>
<dbReference type="Proteomes" id="UP000139997">
    <property type="component" value="Genome"/>
</dbReference>
<dbReference type="GO" id="GO:0030430">
    <property type="term" value="C:host cell cytoplasm"/>
    <property type="evidence" value="ECO:0007669"/>
    <property type="project" value="UniProtKB-SubCell"/>
</dbReference>
<dbReference type="GO" id="GO:0044196">
    <property type="term" value="C:host cell nucleolus"/>
    <property type="evidence" value="ECO:0007669"/>
    <property type="project" value="UniProtKB-SubCell"/>
</dbReference>
<dbReference type="GO" id="GO:0042025">
    <property type="term" value="C:host cell nucleus"/>
    <property type="evidence" value="ECO:0000314"/>
    <property type="project" value="UniProtKB"/>
</dbReference>
<dbReference type="GO" id="GO:0039724">
    <property type="term" value="P:symbiont-mediated suppression of host cytoplasmic pattern recognition receptor signaling pathway via inhibition of IKBKE activity"/>
    <property type="evidence" value="ECO:0007669"/>
    <property type="project" value="UniProtKB-KW"/>
</dbReference>
<dbReference type="GO" id="GO:0085034">
    <property type="term" value="P:symbiont-mediated suppression of host NF-kappaB cascade"/>
    <property type="evidence" value="ECO:0007669"/>
    <property type="project" value="UniProtKB-KW"/>
</dbReference>
<dbReference type="GO" id="GO:0039502">
    <property type="term" value="P:symbiont-mediated suppression of host type I interferon-mediated signaling pathway"/>
    <property type="evidence" value="ECO:0000314"/>
    <property type="project" value="UniProtKB"/>
</dbReference>
<dbReference type="CDD" id="cd21651">
    <property type="entry name" value="ORF4b_MERS-CoV-like"/>
    <property type="match status" value="1"/>
</dbReference>
<dbReference type="InterPro" id="IPR044321">
    <property type="entry name" value="ORF4b_MERS-CoV-like"/>
</dbReference>
<gene>
    <name type="primary">ORF4b</name>
</gene>
<comment type="function">
    <text evidence="2 3 4 5">Plays a role in the inhibition of host innate immunity by inhibiting the interaction between host IKBKE and MAVS. In turn, this inhibition prevents the production of host interferon beta. Additionally, inhibits host NF-kappa-B by interacting with host KPNA4 and thereby preventing the translocation of the NF-kappa-B complex into the nucleus by this importin (PubMed:29370303).</text>
</comment>
<comment type="subunit">
    <text evidence="5">Interacts with host KPNA4; this interaction inhibits the nuclear import of NF-kappa-B complex.</text>
</comment>
<comment type="interaction">
    <interactant intactId="EBI-25641007">
        <id>K9N643</id>
    </interactant>
    <interactant intactId="EBI-358383">
        <id>P52294</id>
        <label>KPNA1</label>
    </interactant>
    <organismsDiffer>true</organismsDiffer>
    <experiments>3</experiments>
</comment>
<comment type="interaction">
    <interactant intactId="EBI-25641007">
        <id>K9N643</id>
    </interactant>
    <interactant intactId="EBI-349938">
        <id>P52292</id>
        <label>KPNA2</label>
    </interactant>
    <organismsDiffer>true</organismsDiffer>
    <experiments>2</experiments>
</comment>
<comment type="interaction">
    <interactant intactId="EBI-25641007">
        <id>K9N643</id>
    </interactant>
    <interactant intactId="EBI-358297">
        <id>O00505</id>
        <label>KPNA3</label>
    </interactant>
    <organismsDiffer>true</organismsDiffer>
    <experiments>4</experiments>
</comment>
<comment type="interaction">
    <interactant intactId="EBI-25641007">
        <id>K9N643</id>
    </interactant>
    <interactant intactId="EBI-396343">
        <id>O00629</id>
        <label>KPNA4</label>
    </interactant>
    <organismsDiffer>true</organismsDiffer>
    <experiments>7</experiments>
</comment>
<comment type="subcellular location">
    <subcellularLocation>
        <location evidence="2 3 4 5">Host nucleus</location>
    </subcellularLocation>
    <subcellularLocation>
        <location evidence="4">Host nucleus</location>
        <location evidence="4">Host nucleolus</location>
    </subcellularLocation>
    <subcellularLocation>
        <location evidence="4">Host cytoplasm</location>
    </subcellularLocation>
    <text evidence="2 3 4">Mainly localized in the host nucleus.</text>
</comment>
<protein>
    <recommendedName>
        <fullName>Non-structural protein ORF4b</fullName>
        <shortName>ORF4b</shortName>
    </recommendedName>
</protein>
<reference key="1">
    <citation type="journal article" date="2012" name="Eurosurveillance">
        <title>Severe respiratory illness caused by a novel coronavirus, in a patient transferred to the United Kingdom from the Middle East, September 2012.</title>
        <authorList>
            <person name="Bermingham A."/>
            <person name="Chand M.A."/>
            <person name="Brown C.S."/>
            <person name="Aarons E."/>
            <person name="Tong C."/>
            <person name="Langrish C."/>
            <person name="Hoschler K."/>
            <person name="Brown K."/>
            <person name="Galiano M."/>
            <person name="Myers R."/>
            <person name="Pebody R.G."/>
            <person name="Green H.K."/>
            <person name="Boddington N.L."/>
            <person name="Gopal R."/>
            <person name="Price N."/>
            <person name="Newsholme W."/>
            <person name="Drosten C."/>
            <person name="Fouchier R.A."/>
            <person name="Zambon M."/>
        </authorList>
    </citation>
    <scope>NUCLEOTIDE SEQUENCE [GENOMIC RNA]</scope>
</reference>
<reference key="2">
    <citation type="journal article" date="2013" name="Protein Cell">
        <title>The structural and accessory proteins M, ORF 4a, ORF 4b, and ORF 5 of Middle East respiratory syndrome coronavirus (MERS-CoV) are potent interferon antagonists.</title>
        <authorList>
            <person name="Yang Y."/>
            <person name="Zhang L."/>
            <person name="Geng H."/>
            <person name="Deng Y."/>
            <person name="Huang B."/>
            <person name="Guo Y."/>
            <person name="Zhao Z."/>
            <person name="Tan W."/>
        </authorList>
    </citation>
    <scope>FUNCTION</scope>
    <scope>SUBCELLULAR LOCATION</scope>
</reference>
<reference key="3">
    <citation type="journal article" date="2014" name="J. Gen. Virol.">
        <title>The ORF4b-encoded accessory proteins of Middle East respiratory syndrome coronavirus and two related bat coronaviruses localize to the nucleus and inhibit innate immune signalling.</title>
        <authorList>
            <person name="Matthews K.L."/>
            <person name="Coleman C.M."/>
            <person name="van der Meer Y."/>
            <person name="Snijder E.J."/>
            <person name="Frieman M.B."/>
        </authorList>
    </citation>
    <scope>FUNCTION</scope>
    <scope>SUBCELLULAR LOCATION</scope>
</reference>
<reference key="4">
    <citation type="journal article" date="2015" name="Sci. Rep.">
        <title>Middle East respiratory syndrome coronavirus ORF4b protein inhibits type I interferon production through both cytoplasmic and nuclear targets.</title>
        <authorList>
            <person name="Yang Y."/>
            <person name="Ye F."/>
            <person name="Zhu N."/>
            <person name="Wang W."/>
            <person name="Deng Y."/>
            <person name="Zhao Z."/>
            <person name="Tan W."/>
        </authorList>
    </citation>
    <scope>FUNCTION</scope>
    <scope>SUBCELLULAR LOCATION</scope>
</reference>
<reference key="5">
    <citation type="journal article" date="2018" name="PLoS Pathog.">
        <title>MERS-CoV 4b protein interferes with the NF-kappaB-dependent innate immune response during infection.</title>
        <authorList>
            <person name="Canton J."/>
            <person name="Fehr A.R."/>
            <person name="Fernandez-Delgado R."/>
            <person name="Gutierrez-Alvarez F.J."/>
            <person name="Sanchez-Aparicio M.T."/>
            <person name="Garcia-Sastre A."/>
            <person name="Perlman S."/>
            <person name="Enjuanes L."/>
            <person name="Sola I."/>
        </authorList>
    </citation>
    <scope>FUNCTION</scope>
    <scope>SUBCELLULAR LOCATION</scope>
    <scope>INTERACTION WITH HOST KPNA4</scope>
</reference>
<sequence length="246" mass="28563">MEESLMDVPSTSGTQVYSRKARKRSHSPTKKLRYVKRRFSLLRPEDLSVIVQPTHYVRVTFSDPNMWYLRSGHHLHSVHNWLKPYGGQPVSEYHITLALLNLTDEDLARDFSPIALFLRNVRFELHEFALLRKTLVLNASEIYCANIHRFKPVYRVNTAIPTIKDWLLVQGFSLYHSGLPLHMSISKLHALDDVTRNYIITMPCFRTYPQQMFVTPLAVDVVSIRSSNQGNKQIVHSYPILHHPGF</sequence>
<evidence type="ECO:0000256" key="1">
    <source>
        <dbReference type="SAM" id="MobiDB-lite"/>
    </source>
</evidence>
<evidence type="ECO:0000269" key="2">
    <source>
    </source>
</evidence>
<evidence type="ECO:0000269" key="3">
    <source>
    </source>
</evidence>
<evidence type="ECO:0000269" key="4">
    <source>
    </source>
</evidence>
<evidence type="ECO:0000269" key="5">
    <source>
    </source>
</evidence>
<feature type="chain" id="PRO_0000422437" description="Non-structural protein ORF4b">
    <location>
        <begin position="1"/>
        <end position="246"/>
    </location>
</feature>
<feature type="region of interest" description="Disordered" evidence="1">
    <location>
        <begin position="1"/>
        <end position="28"/>
    </location>
</feature>
<feature type="short sequence motif" description="Nuclear localization motif" evidence="5">
    <location>
        <begin position="22"/>
        <end position="38"/>
    </location>
</feature>
<feature type="compositionally biased region" description="Basic residues" evidence="1">
    <location>
        <begin position="19"/>
        <end position="28"/>
    </location>
</feature>
<organism>
    <name type="scientific">Middle East respiratory syndrome-related coronavirus (isolate United Kingdom/H123990006/2012)</name>
    <name type="common">MERS-CoV</name>
    <name type="synonym">Betacoronavirus England 1</name>
    <dbReference type="NCBI Taxonomy" id="1263720"/>
    <lineage>
        <taxon>Viruses</taxon>
        <taxon>Riboviria</taxon>
        <taxon>Orthornavirae</taxon>
        <taxon>Pisuviricota</taxon>
        <taxon>Pisoniviricetes</taxon>
        <taxon>Nidovirales</taxon>
        <taxon>Cornidovirineae</taxon>
        <taxon>Coronaviridae</taxon>
        <taxon>Orthocoronavirinae</taxon>
        <taxon>Betacoronavirus</taxon>
        <taxon>Merbecovirus</taxon>
        <taxon>Middle East respiratory syndrome-related coronavirus</taxon>
    </lineage>
</organism>